<reference key="1">
    <citation type="submission" date="2006-09" db="EMBL/GenBank/DDBJ databases">
        <title>Complete sequence of chromosome 1 of Shewanella sp. ANA-3.</title>
        <authorList>
            <person name="Copeland A."/>
            <person name="Lucas S."/>
            <person name="Lapidus A."/>
            <person name="Barry K."/>
            <person name="Detter J.C."/>
            <person name="Glavina del Rio T."/>
            <person name="Hammon N."/>
            <person name="Israni S."/>
            <person name="Dalin E."/>
            <person name="Tice H."/>
            <person name="Pitluck S."/>
            <person name="Chertkov O."/>
            <person name="Brettin T."/>
            <person name="Bruce D."/>
            <person name="Han C."/>
            <person name="Tapia R."/>
            <person name="Gilna P."/>
            <person name="Schmutz J."/>
            <person name="Larimer F."/>
            <person name="Land M."/>
            <person name="Hauser L."/>
            <person name="Kyrpides N."/>
            <person name="Kim E."/>
            <person name="Newman D."/>
            <person name="Salticov C."/>
            <person name="Konstantinidis K."/>
            <person name="Klappenback J."/>
            <person name="Tiedje J."/>
            <person name="Richardson P."/>
        </authorList>
    </citation>
    <scope>NUCLEOTIDE SEQUENCE [LARGE SCALE GENOMIC DNA]</scope>
    <source>
        <strain>ANA-3</strain>
    </source>
</reference>
<protein>
    <recommendedName>
        <fullName evidence="1">Flagellar P-ring protein</fullName>
    </recommendedName>
    <alternativeName>
        <fullName evidence="1">Basal body P-ring protein</fullName>
    </alternativeName>
</protein>
<feature type="signal peptide" evidence="1">
    <location>
        <begin position="1"/>
        <end position="20"/>
    </location>
</feature>
<feature type="chain" id="PRO_1000050118" description="Flagellar P-ring protein">
    <location>
        <begin position="21"/>
        <end position="363"/>
    </location>
</feature>
<organism>
    <name type="scientific">Shewanella sp. (strain ANA-3)</name>
    <dbReference type="NCBI Taxonomy" id="94122"/>
    <lineage>
        <taxon>Bacteria</taxon>
        <taxon>Pseudomonadati</taxon>
        <taxon>Pseudomonadota</taxon>
        <taxon>Gammaproteobacteria</taxon>
        <taxon>Alteromonadales</taxon>
        <taxon>Shewanellaceae</taxon>
        <taxon>Shewanella</taxon>
    </lineage>
</organism>
<gene>
    <name evidence="1" type="primary">flgI</name>
    <name type="ordered locus">Shewana3_1328</name>
</gene>
<proteinExistence type="inferred from homology"/>
<dbReference type="EMBL" id="CP000469">
    <property type="protein sequence ID" value="ABK47562.1"/>
    <property type="molecule type" value="Genomic_DNA"/>
</dbReference>
<dbReference type="RefSeq" id="WP_011716402.1">
    <property type="nucleotide sequence ID" value="NC_008577.1"/>
</dbReference>
<dbReference type="SMR" id="A0KUU3"/>
<dbReference type="STRING" id="94122.Shewana3_1328"/>
<dbReference type="KEGG" id="shn:Shewana3_1328"/>
<dbReference type="eggNOG" id="COG1706">
    <property type="taxonomic scope" value="Bacteria"/>
</dbReference>
<dbReference type="HOGENOM" id="CLU_045235_1_0_6"/>
<dbReference type="OrthoDB" id="9786431at2"/>
<dbReference type="Proteomes" id="UP000002589">
    <property type="component" value="Chromosome"/>
</dbReference>
<dbReference type="GO" id="GO:0009428">
    <property type="term" value="C:bacterial-type flagellum basal body, distal rod, P ring"/>
    <property type="evidence" value="ECO:0007669"/>
    <property type="project" value="InterPro"/>
</dbReference>
<dbReference type="GO" id="GO:0030288">
    <property type="term" value="C:outer membrane-bounded periplasmic space"/>
    <property type="evidence" value="ECO:0007669"/>
    <property type="project" value="InterPro"/>
</dbReference>
<dbReference type="GO" id="GO:0005198">
    <property type="term" value="F:structural molecule activity"/>
    <property type="evidence" value="ECO:0007669"/>
    <property type="project" value="InterPro"/>
</dbReference>
<dbReference type="GO" id="GO:0071973">
    <property type="term" value="P:bacterial-type flagellum-dependent cell motility"/>
    <property type="evidence" value="ECO:0007669"/>
    <property type="project" value="InterPro"/>
</dbReference>
<dbReference type="HAMAP" id="MF_00416">
    <property type="entry name" value="FlgI"/>
    <property type="match status" value="1"/>
</dbReference>
<dbReference type="InterPro" id="IPR001782">
    <property type="entry name" value="Flag_FlgI"/>
</dbReference>
<dbReference type="NCBIfam" id="NF003676">
    <property type="entry name" value="PRK05303.1"/>
    <property type="match status" value="1"/>
</dbReference>
<dbReference type="PANTHER" id="PTHR30381">
    <property type="entry name" value="FLAGELLAR P-RING PERIPLASMIC PROTEIN FLGI"/>
    <property type="match status" value="1"/>
</dbReference>
<dbReference type="PANTHER" id="PTHR30381:SF0">
    <property type="entry name" value="FLAGELLAR P-RING PROTEIN"/>
    <property type="match status" value="1"/>
</dbReference>
<dbReference type="Pfam" id="PF02119">
    <property type="entry name" value="FlgI"/>
    <property type="match status" value="1"/>
</dbReference>
<dbReference type="PRINTS" id="PR01010">
    <property type="entry name" value="FLGPRINGFLGI"/>
</dbReference>
<evidence type="ECO:0000255" key="1">
    <source>
        <dbReference type="HAMAP-Rule" id="MF_00416"/>
    </source>
</evidence>
<keyword id="KW-0975">Bacterial flagellum</keyword>
<keyword id="KW-0574">Periplasm</keyword>
<keyword id="KW-0732">Signal</keyword>
<comment type="function">
    <text evidence="1">Assembles around the rod to form the L-ring and probably protects the motor/basal body from shearing forces during rotation.</text>
</comment>
<comment type="subunit">
    <text evidence="1">The basal body constitutes a major portion of the flagellar organelle and consists of four rings (L,P,S, and M) mounted on a central rod.</text>
</comment>
<comment type="subcellular location">
    <subcellularLocation>
        <location evidence="1">Periplasm</location>
    </subcellularLocation>
    <subcellularLocation>
        <location evidence="1">Bacterial flagellum basal body</location>
    </subcellularLocation>
</comment>
<comment type="similarity">
    <text evidence="1">Belongs to the FlgI family.</text>
</comment>
<accession>A0KUU3</accession>
<name>FLGI_SHESA</name>
<sequence length="363" mass="38285">MKYRLIVALAMLVLSLPSQAERIKDIANVQGVRSNQLIGYGLVVGLPGTGEKTNYTEQTFTTMLKNFGINLPDNFRPKIKNVAVVAVHADMPAFIKPGQQLDVTVSSLGEAKSLRGGTLLQTFLKGVDGNVYAIAQGSLVVSGFSAEGLDGSKVIQNTPTVGRIPNGAIVERSVATPFSSGDYLTFNLRRADFSTAQRMADAINDLLGPDMARPLDATSVQVSAPRDVSQRVSFLATLENLDVIPAEESAKVIVNSRTGTIVVGQHVKLLPAAVTHGGLTVTIAEATQVSQPNALANGETVVTANTTIGVNESDRRMFMFSPGTTLDELVRAVNLVGAAPSDVLAILEALKVAGALHGELIII</sequence>